<keyword id="KW-0028">Amino-acid biosynthesis</keyword>
<keyword id="KW-0057">Aromatic amino acid biosynthesis</keyword>
<keyword id="KW-0963">Cytoplasm</keyword>
<keyword id="KW-0808">Transferase</keyword>
<reference key="1">
    <citation type="journal article" date="2010" name="Genome Biol.">
        <title>Structure and dynamics of the pan-genome of Streptococcus pneumoniae and closely related species.</title>
        <authorList>
            <person name="Donati C."/>
            <person name="Hiller N.L."/>
            <person name="Tettelin H."/>
            <person name="Muzzi A."/>
            <person name="Croucher N.J."/>
            <person name="Angiuoli S.V."/>
            <person name="Oggioni M."/>
            <person name="Dunning Hotopp J.C."/>
            <person name="Hu F.Z."/>
            <person name="Riley D.R."/>
            <person name="Covacci A."/>
            <person name="Mitchell T.J."/>
            <person name="Bentley S.D."/>
            <person name="Kilian M."/>
            <person name="Ehrlich G.D."/>
            <person name="Rappuoli R."/>
            <person name="Moxon E.R."/>
            <person name="Masignani V."/>
        </authorList>
    </citation>
    <scope>NUCLEOTIDE SEQUENCE [LARGE SCALE GENOMIC DNA]</scope>
    <source>
        <strain>Hungary19A-6</strain>
    </source>
</reference>
<proteinExistence type="inferred from homology"/>
<organism>
    <name type="scientific">Streptococcus pneumoniae (strain Hungary19A-6)</name>
    <dbReference type="NCBI Taxonomy" id="487214"/>
    <lineage>
        <taxon>Bacteria</taxon>
        <taxon>Bacillati</taxon>
        <taxon>Bacillota</taxon>
        <taxon>Bacilli</taxon>
        <taxon>Lactobacillales</taxon>
        <taxon>Streptococcaceae</taxon>
        <taxon>Streptococcus</taxon>
    </lineage>
</organism>
<comment type="function">
    <text evidence="1">Catalyzes the transfer of the enolpyruvyl moiety of phosphoenolpyruvate (PEP) to the 5-hydroxyl of shikimate-3-phosphate (S3P) to produce enolpyruvyl shikimate-3-phosphate and inorganic phosphate.</text>
</comment>
<comment type="catalytic activity">
    <reaction evidence="1">
        <text>3-phosphoshikimate + phosphoenolpyruvate = 5-O-(1-carboxyvinyl)-3-phosphoshikimate + phosphate</text>
        <dbReference type="Rhea" id="RHEA:21256"/>
        <dbReference type="ChEBI" id="CHEBI:43474"/>
        <dbReference type="ChEBI" id="CHEBI:57701"/>
        <dbReference type="ChEBI" id="CHEBI:58702"/>
        <dbReference type="ChEBI" id="CHEBI:145989"/>
        <dbReference type="EC" id="2.5.1.19"/>
    </reaction>
    <physiologicalReaction direction="left-to-right" evidence="1">
        <dbReference type="Rhea" id="RHEA:21257"/>
    </physiologicalReaction>
</comment>
<comment type="pathway">
    <text evidence="1">Metabolic intermediate biosynthesis; chorismate biosynthesis; chorismate from D-erythrose 4-phosphate and phosphoenolpyruvate: step 6/7.</text>
</comment>
<comment type="subunit">
    <text evidence="1">Monomer.</text>
</comment>
<comment type="subcellular location">
    <subcellularLocation>
        <location evidence="1">Cytoplasm</location>
    </subcellularLocation>
</comment>
<comment type="similarity">
    <text evidence="1">Belongs to the EPSP synthase family.</text>
</comment>
<feature type="chain" id="PRO_1000099757" description="3-phosphoshikimate 1-carboxyvinyltransferase">
    <location>
        <begin position="1"/>
        <end position="427"/>
    </location>
</feature>
<feature type="active site" description="Proton acceptor" evidence="1">
    <location>
        <position position="312"/>
    </location>
</feature>
<feature type="binding site" evidence="1">
    <location>
        <position position="20"/>
    </location>
    <ligand>
        <name>3-phosphoshikimate</name>
        <dbReference type="ChEBI" id="CHEBI:145989"/>
    </ligand>
</feature>
<feature type="binding site" evidence="1">
    <location>
        <position position="20"/>
    </location>
    <ligand>
        <name>phosphoenolpyruvate</name>
        <dbReference type="ChEBI" id="CHEBI:58702"/>
    </ligand>
</feature>
<feature type="binding site" evidence="1">
    <location>
        <position position="21"/>
    </location>
    <ligand>
        <name>3-phosphoshikimate</name>
        <dbReference type="ChEBI" id="CHEBI:145989"/>
    </ligand>
</feature>
<feature type="binding site" evidence="1">
    <location>
        <position position="25"/>
    </location>
    <ligand>
        <name>3-phosphoshikimate</name>
        <dbReference type="ChEBI" id="CHEBI:145989"/>
    </ligand>
</feature>
<feature type="binding site" evidence="1">
    <location>
        <position position="92"/>
    </location>
    <ligand>
        <name>phosphoenolpyruvate</name>
        <dbReference type="ChEBI" id="CHEBI:58702"/>
    </ligand>
</feature>
<feature type="binding site" evidence="1">
    <location>
        <position position="120"/>
    </location>
    <ligand>
        <name>phosphoenolpyruvate</name>
        <dbReference type="ChEBI" id="CHEBI:58702"/>
    </ligand>
</feature>
<feature type="binding site" evidence="1">
    <location>
        <position position="166"/>
    </location>
    <ligand>
        <name>3-phosphoshikimate</name>
        <dbReference type="ChEBI" id="CHEBI:145989"/>
    </ligand>
</feature>
<feature type="binding site" evidence="1">
    <location>
        <position position="168"/>
    </location>
    <ligand>
        <name>3-phosphoshikimate</name>
        <dbReference type="ChEBI" id="CHEBI:145989"/>
    </ligand>
</feature>
<feature type="binding site" evidence="1">
    <location>
        <position position="168"/>
    </location>
    <ligand>
        <name>phosphoenolpyruvate</name>
        <dbReference type="ChEBI" id="CHEBI:58702"/>
    </ligand>
</feature>
<feature type="binding site" evidence="1">
    <location>
        <position position="312"/>
    </location>
    <ligand>
        <name>3-phosphoshikimate</name>
        <dbReference type="ChEBI" id="CHEBI:145989"/>
    </ligand>
</feature>
<feature type="binding site" evidence="1">
    <location>
        <position position="339"/>
    </location>
    <ligand>
        <name>3-phosphoshikimate</name>
        <dbReference type="ChEBI" id="CHEBI:145989"/>
    </ligand>
</feature>
<feature type="binding site" evidence="1">
    <location>
        <position position="343"/>
    </location>
    <ligand>
        <name>phosphoenolpyruvate</name>
        <dbReference type="ChEBI" id="CHEBI:58702"/>
    </ligand>
</feature>
<feature type="binding site" evidence="1">
    <location>
        <position position="385"/>
    </location>
    <ligand>
        <name>phosphoenolpyruvate</name>
        <dbReference type="ChEBI" id="CHEBI:58702"/>
    </ligand>
</feature>
<evidence type="ECO:0000255" key="1">
    <source>
        <dbReference type="HAMAP-Rule" id="MF_00210"/>
    </source>
</evidence>
<accession>B1ICH2</accession>
<name>AROA_STRPI</name>
<dbReference type="EC" id="2.5.1.19" evidence="1"/>
<dbReference type="EMBL" id="CP000936">
    <property type="protein sequence ID" value="ACA36348.1"/>
    <property type="molecule type" value="Genomic_DNA"/>
</dbReference>
<dbReference type="RefSeq" id="WP_001842107.1">
    <property type="nucleotide sequence ID" value="NC_010380.1"/>
</dbReference>
<dbReference type="SMR" id="B1ICH2"/>
<dbReference type="KEGG" id="spv:SPH_1503"/>
<dbReference type="HOGENOM" id="CLU_024321_0_1_9"/>
<dbReference type="UniPathway" id="UPA00053">
    <property type="reaction ID" value="UER00089"/>
</dbReference>
<dbReference type="Proteomes" id="UP000002163">
    <property type="component" value="Chromosome"/>
</dbReference>
<dbReference type="GO" id="GO:0005737">
    <property type="term" value="C:cytoplasm"/>
    <property type="evidence" value="ECO:0007669"/>
    <property type="project" value="UniProtKB-SubCell"/>
</dbReference>
<dbReference type="GO" id="GO:0003866">
    <property type="term" value="F:3-phosphoshikimate 1-carboxyvinyltransferase activity"/>
    <property type="evidence" value="ECO:0007669"/>
    <property type="project" value="UniProtKB-UniRule"/>
</dbReference>
<dbReference type="GO" id="GO:0008652">
    <property type="term" value="P:amino acid biosynthetic process"/>
    <property type="evidence" value="ECO:0007669"/>
    <property type="project" value="UniProtKB-KW"/>
</dbReference>
<dbReference type="GO" id="GO:0009073">
    <property type="term" value="P:aromatic amino acid family biosynthetic process"/>
    <property type="evidence" value="ECO:0007669"/>
    <property type="project" value="UniProtKB-KW"/>
</dbReference>
<dbReference type="GO" id="GO:0009423">
    <property type="term" value="P:chorismate biosynthetic process"/>
    <property type="evidence" value="ECO:0007669"/>
    <property type="project" value="UniProtKB-UniRule"/>
</dbReference>
<dbReference type="CDD" id="cd01554">
    <property type="entry name" value="EPT-like"/>
    <property type="match status" value="1"/>
</dbReference>
<dbReference type="FunFam" id="3.65.10.10:FF:000005">
    <property type="entry name" value="3-phosphoshikimate 1-carboxyvinyltransferase"/>
    <property type="match status" value="1"/>
</dbReference>
<dbReference type="FunFam" id="3.65.10.10:FF:000006">
    <property type="entry name" value="3-phosphoshikimate 1-carboxyvinyltransferase"/>
    <property type="match status" value="1"/>
</dbReference>
<dbReference type="Gene3D" id="3.65.10.10">
    <property type="entry name" value="Enolpyruvate transferase domain"/>
    <property type="match status" value="2"/>
</dbReference>
<dbReference type="HAMAP" id="MF_00210">
    <property type="entry name" value="EPSP_synth"/>
    <property type="match status" value="1"/>
</dbReference>
<dbReference type="InterPro" id="IPR001986">
    <property type="entry name" value="Enolpyruvate_Tfrase_dom"/>
</dbReference>
<dbReference type="InterPro" id="IPR036968">
    <property type="entry name" value="Enolpyruvate_Tfrase_sf"/>
</dbReference>
<dbReference type="InterPro" id="IPR006264">
    <property type="entry name" value="EPSP_synthase"/>
</dbReference>
<dbReference type="InterPro" id="IPR023193">
    <property type="entry name" value="EPSP_synthase_CS"/>
</dbReference>
<dbReference type="InterPro" id="IPR013792">
    <property type="entry name" value="RNA3'P_cycl/enolpyr_Trfase_a/b"/>
</dbReference>
<dbReference type="NCBIfam" id="TIGR01356">
    <property type="entry name" value="aroA"/>
    <property type="match status" value="1"/>
</dbReference>
<dbReference type="PANTHER" id="PTHR21090">
    <property type="entry name" value="AROM/DEHYDROQUINATE SYNTHASE"/>
    <property type="match status" value="1"/>
</dbReference>
<dbReference type="PANTHER" id="PTHR21090:SF5">
    <property type="entry name" value="PENTAFUNCTIONAL AROM POLYPEPTIDE"/>
    <property type="match status" value="1"/>
</dbReference>
<dbReference type="Pfam" id="PF00275">
    <property type="entry name" value="EPSP_synthase"/>
    <property type="match status" value="1"/>
</dbReference>
<dbReference type="PIRSF" id="PIRSF000505">
    <property type="entry name" value="EPSPS"/>
    <property type="match status" value="1"/>
</dbReference>
<dbReference type="SUPFAM" id="SSF55205">
    <property type="entry name" value="EPT/RTPC-like"/>
    <property type="match status" value="1"/>
</dbReference>
<dbReference type="PROSITE" id="PS00104">
    <property type="entry name" value="EPSP_SYNTHASE_1"/>
    <property type="match status" value="1"/>
</dbReference>
<dbReference type="PROSITE" id="PS00885">
    <property type="entry name" value="EPSP_SYNTHASE_2"/>
    <property type="match status" value="1"/>
</dbReference>
<gene>
    <name evidence="1" type="primary">aroA</name>
    <name type="ordered locus">SPH_1503</name>
</gene>
<protein>
    <recommendedName>
        <fullName evidence="1">3-phosphoshikimate 1-carboxyvinyltransferase</fullName>
        <ecNumber evidence="1">2.5.1.19</ecNumber>
    </recommendedName>
    <alternativeName>
        <fullName evidence="1">5-enolpyruvylshikimate-3-phosphate synthase</fullName>
        <shortName evidence="1">EPSP synthase</shortName>
        <shortName evidence="1">EPSPS</shortName>
    </alternativeName>
</protein>
<sequence length="427" mass="45710">MKLKTNIRHLHGSIRVPGDKSISHRSIIFGSLAEGETKVYDILRGEDVLSTMQVFRDLGVEIEDKDGVITIQGVGMAGLKAPQNALNMGNSGTSIRLISGVLAGADFEVEMFGDDSLSKRPMDRVTLPLKKMGVSISGQTERDLPPLRLKGTKNLRPIHYELPIASAQVKSALMFAALQAKGASVIIEKECTRNHTEDMLKQFGGHLSVDSKKITVQGPQKLTGQKVVVPGDISSAAFWLVAGLIVPNSRLVLQNVGINETRTGIIDVIRAMGGKLEITEIDPVAKSSTLTVESSDLKGTEIGGALIPRLIDELPIIALLATQAQGVTVIKDAEELKVKETDRIQVVADALNSMGADITPTADGMIIKGKSALHGARVNTFGDHRIGMMTAIAALLVADGEVELDRAEAINTSYPSFFDDLESLIHG</sequence>